<accession>Q8YJ38</accession>
<protein>
    <recommendedName>
        <fullName evidence="1">ATP synthase subunit delta</fullName>
    </recommendedName>
    <alternativeName>
        <fullName evidence="1">ATP synthase F(1) sector subunit delta</fullName>
    </alternativeName>
    <alternativeName>
        <fullName evidence="1">F-type ATPase subunit delta</fullName>
        <shortName evidence="1">F-ATPase subunit delta</shortName>
    </alternativeName>
</protein>
<keyword id="KW-0066">ATP synthesis</keyword>
<keyword id="KW-0997">Cell inner membrane</keyword>
<keyword id="KW-1003">Cell membrane</keyword>
<keyword id="KW-0139">CF(1)</keyword>
<keyword id="KW-0375">Hydrogen ion transport</keyword>
<keyword id="KW-0406">Ion transport</keyword>
<keyword id="KW-0472">Membrane</keyword>
<keyword id="KW-0813">Transport</keyword>
<evidence type="ECO:0000255" key="1">
    <source>
        <dbReference type="HAMAP-Rule" id="MF_01416"/>
    </source>
</evidence>
<feature type="chain" id="PRO_1000184661" description="ATP synthase subunit delta">
    <location>
        <begin position="1"/>
        <end position="186"/>
    </location>
</feature>
<comment type="function">
    <text evidence="1">F(1)F(0) ATP synthase produces ATP from ADP in the presence of a proton or sodium gradient. F-type ATPases consist of two structural domains, F(1) containing the extramembraneous catalytic core and F(0) containing the membrane proton channel, linked together by a central stalk and a peripheral stalk. During catalysis, ATP synthesis in the catalytic domain of F(1) is coupled via a rotary mechanism of the central stalk subunits to proton translocation.</text>
</comment>
<comment type="function">
    <text evidence="1">This protein is part of the stalk that links CF(0) to CF(1). It either transmits conformational changes from CF(0) to CF(1) or is implicated in proton conduction.</text>
</comment>
<comment type="subunit">
    <text evidence="1">F-type ATPases have 2 components, F(1) - the catalytic core - and F(0) - the membrane proton channel. F(1) has five subunits: alpha(3), beta(3), gamma(1), delta(1), epsilon(1). F(0) has three main subunits: a(1), b(2) and c(10-14). The alpha and beta chains form an alternating ring which encloses part of the gamma chain. F(1) is attached to F(0) by a central stalk formed by the gamma and epsilon chains, while a peripheral stalk is formed by the delta and b chains.</text>
</comment>
<comment type="subcellular location">
    <subcellularLocation>
        <location evidence="1">Cell inner membrane</location>
        <topology evidence="1">Peripheral membrane protein</topology>
    </subcellularLocation>
</comment>
<comment type="similarity">
    <text evidence="1">Belongs to the ATPase delta chain family.</text>
</comment>
<organism>
    <name type="scientific">Brucella melitensis biotype 1 (strain ATCC 23456 / CCUG 17765 / NCTC 10094 / 16M)</name>
    <dbReference type="NCBI Taxonomy" id="224914"/>
    <lineage>
        <taxon>Bacteria</taxon>
        <taxon>Pseudomonadati</taxon>
        <taxon>Pseudomonadota</taxon>
        <taxon>Alphaproteobacteria</taxon>
        <taxon>Hyphomicrobiales</taxon>
        <taxon>Brucellaceae</taxon>
        <taxon>Brucella/Ochrobactrum group</taxon>
        <taxon>Brucella</taxon>
    </lineage>
</organism>
<reference key="1">
    <citation type="journal article" date="2002" name="Proc. Natl. Acad. Sci. U.S.A.">
        <title>The genome sequence of the facultative intracellular pathogen Brucella melitensis.</title>
        <authorList>
            <person name="DelVecchio V.G."/>
            <person name="Kapatral V."/>
            <person name="Redkar R.J."/>
            <person name="Patra G."/>
            <person name="Mujer C."/>
            <person name="Los T."/>
            <person name="Ivanova N."/>
            <person name="Anderson I."/>
            <person name="Bhattacharyya A."/>
            <person name="Lykidis A."/>
            <person name="Reznik G."/>
            <person name="Jablonski L."/>
            <person name="Larsen N."/>
            <person name="D'Souza M."/>
            <person name="Bernal A."/>
            <person name="Mazur M."/>
            <person name="Goltsman E."/>
            <person name="Selkov E."/>
            <person name="Elzer P.H."/>
            <person name="Hagius S."/>
            <person name="O'Callaghan D."/>
            <person name="Letesson J.-J."/>
            <person name="Haselkorn R."/>
            <person name="Kyrpides N.C."/>
            <person name="Overbeek R."/>
        </authorList>
    </citation>
    <scope>NUCLEOTIDE SEQUENCE [LARGE SCALE GENOMIC DNA]</scope>
    <source>
        <strain>ATCC 23456 / CCUG 17765 / NCTC 10094 / 16M</strain>
    </source>
</reference>
<proteinExistence type="inferred from homology"/>
<name>ATPD_BRUME</name>
<sequence length="186" mass="19564">MAETSSLISGVAQRCAGSLFELALDANSVASVEKDLGRFEALLSGSEDLRRLISSPVFSSEDQLHAIGAIADKAGIKGLVGNFLRVVAQNRRLFALPGIIAAFRQIAAEHRGEISADVVSAHELTSAQQNELKATLKGVAGKDVTINVTVDPSILGGLIVKMGSRQIDTSLRTKLSSLKLALKEVG</sequence>
<gene>
    <name evidence="1" type="primary">atpH</name>
    <name type="ordered locus">BMEI0248</name>
</gene>
<dbReference type="EMBL" id="AE008917">
    <property type="protein sequence ID" value="AAL51430.1"/>
    <property type="molecule type" value="Genomic_DNA"/>
</dbReference>
<dbReference type="PIR" id="AC3283">
    <property type="entry name" value="AC3283"/>
</dbReference>
<dbReference type="RefSeq" id="WP_004684267.1">
    <property type="nucleotide sequence ID" value="NZ_GG703781.1"/>
</dbReference>
<dbReference type="SMR" id="Q8YJ38"/>
<dbReference type="GeneID" id="29593005"/>
<dbReference type="KEGG" id="bme:BMEI0248"/>
<dbReference type="KEGG" id="bmel:DK63_1184"/>
<dbReference type="PATRIC" id="fig|224914.52.peg.1251"/>
<dbReference type="eggNOG" id="COG0712">
    <property type="taxonomic scope" value="Bacteria"/>
</dbReference>
<dbReference type="PhylomeDB" id="Q8YJ38"/>
<dbReference type="Proteomes" id="UP000000419">
    <property type="component" value="Chromosome I"/>
</dbReference>
<dbReference type="GO" id="GO:0005886">
    <property type="term" value="C:plasma membrane"/>
    <property type="evidence" value="ECO:0007669"/>
    <property type="project" value="UniProtKB-SubCell"/>
</dbReference>
<dbReference type="GO" id="GO:0045259">
    <property type="term" value="C:proton-transporting ATP synthase complex"/>
    <property type="evidence" value="ECO:0007669"/>
    <property type="project" value="UniProtKB-KW"/>
</dbReference>
<dbReference type="GO" id="GO:0046933">
    <property type="term" value="F:proton-transporting ATP synthase activity, rotational mechanism"/>
    <property type="evidence" value="ECO:0007669"/>
    <property type="project" value="UniProtKB-UniRule"/>
</dbReference>
<dbReference type="Gene3D" id="1.10.520.20">
    <property type="entry name" value="N-terminal domain of the delta subunit of the F1F0-ATP synthase"/>
    <property type="match status" value="1"/>
</dbReference>
<dbReference type="HAMAP" id="MF_01416">
    <property type="entry name" value="ATP_synth_delta_bact"/>
    <property type="match status" value="1"/>
</dbReference>
<dbReference type="InterPro" id="IPR026015">
    <property type="entry name" value="ATP_synth_OSCP/delta_N_sf"/>
</dbReference>
<dbReference type="InterPro" id="IPR020781">
    <property type="entry name" value="ATPase_OSCP/d_CS"/>
</dbReference>
<dbReference type="InterPro" id="IPR000711">
    <property type="entry name" value="ATPase_OSCP/dsu"/>
</dbReference>
<dbReference type="NCBIfam" id="TIGR01145">
    <property type="entry name" value="ATP_synt_delta"/>
    <property type="match status" value="1"/>
</dbReference>
<dbReference type="NCBIfam" id="NF004406">
    <property type="entry name" value="PRK05758.3-2"/>
    <property type="match status" value="1"/>
</dbReference>
<dbReference type="PANTHER" id="PTHR11910">
    <property type="entry name" value="ATP SYNTHASE DELTA CHAIN"/>
    <property type="match status" value="1"/>
</dbReference>
<dbReference type="Pfam" id="PF00213">
    <property type="entry name" value="OSCP"/>
    <property type="match status" value="1"/>
</dbReference>
<dbReference type="PRINTS" id="PR00125">
    <property type="entry name" value="ATPASEDELTA"/>
</dbReference>
<dbReference type="SUPFAM" id="SSF47928">
    <property type="entry name" value="N-terminal domain of the delta subunit of the F1F0-ATP synthase"/>
    <property type="match status" value="1"/>
</dbReference>
<dbReference type="PROSITE" id="PS00389">
    <property type="entry name" value="ATPASE_DELTA"/>
    <property type="match status" value="1"/>
</dbReference>